<gene>
    <name evidence="11" type="primary">GET1</name>
    <name evidence="11" type="synonym">CHD5</name>
    <name evidence="11" type="synonym">WRB</name>
</gene>
<feature type="chain" id="PRO_0000065979" description="Guided entry of tail-anchored proteins factor 1">
    <location>
        <begin position="1"/>
        <end position="174"/>
    </location>
</feature>
<feature type="topological domain" description="Lumenal" evidence="1">
    <location>
        <begin position="1"/>
        <end position="8"/>
    </location>
</feature>
<feature type="transmembrane region" description="Helical" evidence="1">
    <location>
        <begin position="9"/>
        <end position="29"/>
    </location>
</feature>
<feature type="topological domain" description="Cytoplasmic" evidence="1">
    <location>
        <begin position="30"/>
        <end position="99"/>
    </location>
</feature>
<feature type="transmembrane region" description="Helical" evidence="1">
    <location>
        <begin position="100"/>
        <end position="120"/>
    </location>
</feature>
<feature type="topological domain" description="Lumenal" evidence="1">
    <location>
        <begin position="121"/>
        <end position="148"/>
    </location>
</feature>
<feature type="transmembrane region" description="Helical" evidence="1">
    <location>
        <begin position="149"/>
        <end position="169"/>
    </location>
</feature>
<feature type="topological domain" description="Cytoplasmic" evidence="1">
    <location>
        <begin position="170"/>
        <end position="174"/>
    </location>
</feature>
<feature type="region of interest" description="Interaction with GET3/TRC40">
    <location>
        <begin position="39"/>
        <end position="97"/>
    </location>
</feature>
<feature type="coiled-coil region" evidence="1">
    <location>
        <begin position="39"/>
        <end position="94"/>
    </location>
</feature>
<feature type="splice variant" id="VSP_043081" description="In isoform 2." evidence="9">
    <location>
        <begin position="1"/>
        <end position="34"/>
    </location>
</feature>
<feature type="sequence variant" id="VAR_051491" description="In dbSNP:rs35946782.">
    <original>V</original>
    <variation>I</variation>
    <location>
        <position position="110"/>
    </location>
</feature>
<feature type="sequence conflict" description="In Ref. 1; CAA73081." evidence="10" ref="1">
    <original>F</original>
    <variation>I</variation>
    <location>
        <position position="31"/>
    </location>
</feature>
<feature type="helix" evidence="12">
    <location>
        <begin position="6"/>
        <end position="26"/>
    </location>
</feature>
<feature type="helix" evidence="12">
    <location>
        <begin position="28"/>
        <end position="31"/>
    </location>
</feature>
<feature type="helix" evidence="12">
    <location>
        <begin position="33"/>
        <end position="62"/>
    </location>
</feature>
<feature type="helix" evidence="12">
    <location>
        <begin position="69"/>
        <end position="123"/>
    </location>
</feature>
<feature type="strand" evidence="12">
    <location>
        <begin position="124"/>
        <end position="126"/>
    </location>
</feature>
<feature type="helix" evidence="12">
    <location>
        <begin position="133"/>
        <end position="135"/>
    </location>
</feature>
<feature type="helix" evidence="12">
    <location>
        <begin position="140"/>
        <end position="143"/>
    </location>
</feature>
<feature type="helix" evidence="12">
    <location>
        <begin position="152"/>
        <end position="168"/>
    </location>
</feature>
<organism>
    <name type="scientific">Homo sapiens</name>
    <name type="common">Human</name>
    <dbReference type="NCBI Taxonomy" id="9606"/>
    <lineage>
        <taxon>Eukaryota</taxon>
        <taxon>Metazoa</taxon>
        <taxon>Chordata</taxon>
        <taxon>Craniata</taxon>
        <taxon>Vertebrata</taxon>
        <taxon>Euteleostomi</taxon>
        <taxon>Mammalia</taxon>
        <taxon>Eutheria</taxon>
        <taxon>Euarchontoglires</taxon>
        <taxon>Primates</taxon>
        <taxon>Haplorrhini</taxon>
        <taxon>Catarrhini</taxon>
        <taxon>Hominidae</taxon>
        <taxon>Homo</taxon>
    </lineage>
</organism>
<evidence type="ECO:0000255" key="1"/>
<evidence type="ECO:0000269" key="2">
    <source>
    </source>
</evidence>
<evidence type="ECO:0000269" key="3">
    <source>
    </source>
</evidence>
<evidence type="ECO:0000269" key="4">
    <source>
    </source>
</evidence>
<evidence type="ECO:0000269" key="5">
    <source>
    </source>
</evidence>
<evidence type="ECO:0000269" key="6">
    <source>
    </source>
</evidence>
<evidence type="ECO:0000269" key="7">
    <source>
    </source>
</evidence>
<evidence type="ECO:0000269" key="8">
    <source>
    </source>
</evidence>
<evidence type="ECO:0000303" key="9">
    <source>
    </source>
</evidence>
<evidence type="ECO:0000305" key="10"/>
<evidence type="ECO:0000312" key="11">
    <source>
        <dbReference type="HGNC" id="HGNC:12790"/>
    </source>
</evidence>
<evidence type="ECO:0007829" key="12">
    <source>
        <dbReference type="PDB" id="8CR1"/>
    </source>
</evidence>
<protein>
    <recommendedName>
        <fullName evidence="11">Guided entry of tail-anchored proteins factor 1</fullName>
    </recommendedName>
    <alternativeName>
        <fullName>Congenital heart disease 5 protein</fullName>
    </alternativeName>
    <alternativeName>
        <fullName>Tail-anchored protein insertion receptor WRB</fullName>
    </alternativeName>
    <alternativeName>
        <fullName>Tryptophan-rich basic protein</fullName>
    </alternativeName>
</protein>
<sequence length="174" mass="19780">MSSAAADHWAWLLVLSFVFGCNVLRILLPSFSSFMSRVLQKDAEQESQMRAEIQDMKQELSTVNMMDEFARYARLERKINKMTDKLKTHVKARTAQLAKIKWVISVAFYVLQAALMISLIWKYYSVPVAVVPSKWITPLDRLVAFPTRVAGGVGITCWILVCNKVVAIVLHPFS</sequence>
<reference key="1">
    <citation type="journal article" date="1998" name="Hum. Genet.">
        <title>Identification and characterization of a new human cDNA from chromosome 21q22.3 encoding a basic nuclear protein.</title>
        <authorList>
            <person name="Egeo A."/>
            <person name="Mazzocco M."/>
            <person name="Sotgia F."/>
            <person name="Arrigo P."/>
            <person name="Oliva R."/>
            <person name="Bergonon S."/>
            <person name="Nizetic D."/>
            <person name="Rasore-Quartino A."/>
            <person name="Scartezzini P."/>
        </authorList>
    </citation>
    <scope>NUCLEOTIDE SEQUENCE [MRNA] (ISOFORM 1)</scope>
    <source>
        <tissue>Heart</tissue>
    </source>
</reference>
<reference key="2">
    <citation type="journal article" date="2004" name="Nat. Genet.">
        <title>Complete sequencing and characterization of 21,243 full-length human cDNAs.</title>
        <authorList>
            <person name="Ota T."/>
            <person name="Suzuki Y."/>
            <person name="Nishikawa T."/>
            <person name="Otsuki T."/>
            <person name="Sugiyama T."/>
            <person name="Irie R."/>
            <person name="Wakamatsu A."/>
            <person name="Hayashi K."/>
            <person name="Sato H."/>
            <person name="Nagai K."/>
            <person name="Kimura K."/>
            <person name="Makita H."/>
            <person name="Sekine M."/>
            <person name="Obayashi M."/>
            <person name="Nishi T."/>
            <person name="Shibahara T."/>
            <person name="Tanaka T."/>
            <person name="Ishii S."/>
            <person name="Yamamoto J."/>
            <person name="Saito K."/>
            <person name="Kawai Y."/>
            <person name="Isono Y."/>
            <person name="Nakamura Y."/>
            <person name="Nagahari K."/>
            <person name="Murakami K."/>
            <person name="Yasuda T."/>
            <person name="Iwayanagi T."/>
            <person name="Wagatsuma M."/>
            <person name="Shiratori A."/>
            <person name="Sudo H."/>
            <person name="Hosoiri T."/>
            <person name="Kaku Y."/>
            <person name="Kodaira H."/>
            <person name="Kondo H."/>
            <person name="Sugawara M."/>
            <person name="Takahashi M."/>
            <person name="Kanda K."/>
            <person name="Yokoi T."/>
            <person name="Furuya T."/>
            <person name="Kikkawa E."/>
            <person name="Omura Y."/>
            <person name="Abe K."/>
            <person name="Kamihara K."/>
            <person name="Katsuta N."/>
            <person name="Sato K."/>
            <person name="Tanikawa M."/>
            <person name="Yamazaki M."/>
            <person name="Ninomiya K."/>
            <person name="Ishibashi T."/>
            <person name="Yamashita H."/>
            <person name="Murakawa K."/>
            <person name="Fujimori K."/>
            <person name="Tanai H."/>
            <person name="Kimata M."/>
            <person name="Watanabe M."/>
            <person name="Hiraoka S."/>
            <person name="Chiba Y."/>
            <person name="Ishida S."/>
            <person name="Ono Y."/>
            <person name="Takiguchi S."/>
            <person name="Watanabe S."/>
            <person name="Yosida M."/>
            <person name="Hotuta T."/>
            <person name="Kusano J."/>
            <person name="Kanehori K."/>
            <person name="Takahashi-Fujii A."/>
            <person name="Hara H."/>
            <person name="Tanase T.-O."/>
            <person name="Nomura Y."/>
            <person name="Togiya S."/>
            <person name="Komai F."/>
            <person name="Hara R."/>
            <person name="Takeuchi K."/>
            <person name="Arita M."/>
            <person name="Imose N."/>
            <person name="Musashino K."/>
            <person name="Yuuki H."/>
            <person name="Oshima A."/>
            <person name="Sasaki N."/>
            <person name="Aotsuka S."/>
            <person name="Yoshikawa Y."/>
            <person name="Matsunawa H."/>
            <person name="Ichihara T."/>
            <person name="Shiohata N."/>
            <person name="Sano S."/>
            <person name="Moriya S."/>
            <person name="Momiyama H."/>
            <person name="Satoh N."/>
            <person name="Takami S."/>
            <person name="Terashima Y."/>
            <person name="Suzuki O."/>
            <person name="Nakagawa S."/>
            <person name="Senoh A."/>
            <person name="Mizoguchi H."/>
            <person name="Goto Y."/>
            <person name="Shimizu F."/>
            <person name="Wakebe H."/>
            <person name="Hishigaki H."/>
            <person name="Watanabe T."/>
            <person name="Sugiyama A."/>
            <person name="Takemoto M."/>
            <person name="Kawakami B."/>
            <person name="Yamazaki M."/>
            <person name="Watanabe K."/>
            <person name="Kumagai A."/>
            <person name="Itakura S."/>
            <person name="Fukuzumi Y."/>
            <person name="Fujimori Y."/>
            <person name="Komiyama M."/>
            <person name="Tashiro H."/>
            <person name="Tanigami A."/>
            <person name="Fujiwara T."/>
            <person name="Ono T."/>
            <person name="Yamada K."/>
            <person name="Fujii Y."/>
            <person name="Ozaki K."/>
            <person name="Hirao M."/>
            <person name="Ohmori Y."/>
            <person name="Kawabata A."/>
            <person name="Hikiji T."/>
            <person name="Kobatake N."/>
            <person name="Inagaki H."/>
            <person name="Ikema Y."/>
            <person name="Okamoto S."/>
            <person name="Okitani R."/>
            <person name="Kawakami T."/>
            <person name="Noguchi S."/>
            <person name="Itoh T."/>
            <person name="Shigeta K."/>
            <person name="Senba T."/>
            <person name="Matsumura K."/>
            <person name="Nakajima Y."/>
            <person name="Mizuno T."/>
            <person name="Morinaga M."/>
            <person name="Sasaki M."/>
            <person name="Togashi T."/>
            <person name="Oyama M."/>
            <person name="Hata H."/>
            <person name="Watanabe M."/>
            <person name="Komatsu T."/>
            <person name="Mizushima-Sugano J."/>
            <person name="Satoh T."/>
            <person name="Shirai Y."/>
            <person name="Takahashi Y."/>
            <person name="Nakagawa K."/>
            <person name="Okumura K."/>
            <person name="Nagase T."/>
            <person name="Nomura N."/>
            <person name="Kikuchi H."/>
            <person name="Masuho Y."/>
            <person name="Yamashita R."/>
            <person name="Nakai K."/>
            <person name="Yada T."/>
            <person name="Nakamura Y."/>
            <person name="Ohara O."/>
            <person name="Isogai T."/>
            <person name="Sugano S."/>
        </authorList>
    </citation>
    <scope>NUCLEOTIDE SEQUENCE [LARGE SCALE MRNA] (ISOFORMS 1 AND 2)</scope>
</reference>
<reference key="3">
    <citation type="journal article" date="2000" name="Nature">
        <title>The DNA sequence of human chromosome 21.</title>
        <authorList>
            <person name="Hattori M."/>
            <person name="Fujiyama A."/>
            <person name="Taylor T.D."/>
            <person name="Watanabe H."/>
            <person name="Yada T."/>
            <person name="Park H.-S."/>
            <person name="Toyoda A."/>
            <person name="Ishii K."/>
            <person name="Totoki Y."/>
            <person name="Choi D.-K."/>
            <person name="Groner Y."/>
            <person name="Soeda E."/>
            <person name="Ohki M."/>
            <person name="Takagi T."/>
            <person name="Sakaki Y."/>
            <person name="Taudien S."/>
            <person name="Blechschmidt K."/>
            <person name="Polley A."/>
            <person name="Menzel U."/>
            <person name="Delabar J."/>
            <person name="Kumpf K."/>
            <person name="Lehmann R."/>
            <person name="Patterson D."/>
            <person name="Reichwald K."/>
            <person name="Rump A."/>
            <person name="Schillhabel M."/>
            <person name="Schudy A."/>
            <person name="Zimmermann W."/>
            <person name="Rosenthal A."/>
            <person name="Kudoh J."/>
            <person name="Shibuya K."/>
            <person name="Kawasaki K."/>
            <person name="Asakawa S."/>
            <person name="Shintani A."/>
            <person name="Sasaki T."/>
            <person name="Nagamine K."/>
            <person name="Mitsuyama S."/>
            <person name="Antonarakis S.E."/>
            <person name="Minoshima S."/>
            <person name="Shimizu N."/>
            <person name="Nordsiek G."/>
            <person name="Hornischer K."/>
            <person name="Brandt P."/>
            <person name="Scharfe M."/>
            <person name="Schoen O."/>
            <person name="Desario A."/>
            <person name="Reichelt J."/>
            <person name="Kauer G."/>
            <person name="Bloecker H."/>
            <person name="Ramser J."/>
            <person name="Beck A."/>
            <person name="Klages S."/>
            <person name="Hennig S."/>
            <person name="Riesselmann L."/>
            <person name="Dagand E."/>
            <person name="Wehrmeyer S."/>
            <person name="Borzym K."/>
            <person name="Gardiner K."/>
            <person name="Nizetic D."/>
            <person name="Francis F."/>
            <person name="Lehrach H."/>
            <person name="Reinhardt R."/>
            <person name="Yaspo M.-L."/>
        </authorList>
    </citation>
    <scope>NUCLEOTIDE SEQUENCE [LARGE SCALE GENOMIC DNA]</scope>
</reference>
<reference key="4">
    <citation type="submission" date="2005-09" db="EMBL/GenBank/DDBJ databases">
        <authorList>
            <person name="Mural R.J."/>
            <person name="Istrail S."/>
            <person name="Sutton G.G."/>
            <person name="Florea L."/>
            <person name="Halpern A.L."/>
            <person name="Mobarry C.M."/>
            <person name="Lippert R."/>
            <person name="Walenz B."/>
            <person name="Shatkay H."/>
            <person name="Dew I."/>
            <person name="Miller J.R."/>
            <person name="Flanigan M.J."/>
            <person name="Edwards N.J."/>
            <person name="Bolanos R."/>
            <person name="Fasulo D."/>
            <person name="Halldorsson B.V."/>
            <person name="Hannenhalli S."/>
            <person name="Turner R."/>
            <person name="Yooseph S."/>
            <person name="Lu F."/>
            <person name="Nusskern D.R."/>
            <person name="Shue B.C."/>
            <person name="Zheng X.H."/>
            <person name="Zhong F."/>
            <person name="Delcher A.L."/>
            <person name="Huson D.H."/>
            <person name="Kravitz S.A."/>
            <person name="Mouchard L."/>
            <person name="Reinert K."/>
            <person name="Remington K.A."/>
            <person name="Clark A.G."/>
            <person name="Waterman M.S."/>
            <person name="Eichler E.E."/>
            <person name="Adams M.D."/>
            <person name="Hunkapiller M.W."/>
            <person name="Myers E.W."/>
            <person name="Venter J.C."/>
        </authorList>
    </citation>
    <scope>NUCLEOTIDE SEQUENCE [LARGE SCALE GENOMIC DNA]</scope>
</reference>
<reference key="5">
    <citation type="journal article" date="2004" name="Genome Res.">
        <title>The status, quality, and expansion of the NIH full-length cDNA project: the Mammalian Gene Collection (MGC).</title>
        <authorList>
            <consortium name="The MGC Project Team"/>
        </authorList>
    </citation>
    <scope>NUCLEOTIDE SEQUENCE [LARGE SCALE MRNA] (ISOFORM 1)</scope>
    <source>
        <tissue>Ovary</tissue>
    </source>
</reference>
<reference key="6">
    <citation type="journal article" date="2011" name="J. Cell Sci.">
        <title>WRB is the receptor for TRC40/Asna1-mediated insertion of tail-anchored proteins into the ER membrane.</title>
        <authorList>
            <person name="Vilardi F."/>
            <person name="Lorenz H."/>
            <person name="Dobberstein B."/>
        </authorList>
    </citation>
    <scope>FUNCTION</scope>
    <scope>TOPOLOGY</scope>
    <scope>INTERACTION WITH GET3</scope>
    <scope>SUBCELLULAR LOCATION</scope>
</reference>
<reference key="7">
    <citation type="journal article" date="2012" name="Mol. Cell">
        <title>Molecular machinery for insertion of tail-anchored membrane proteins into the endoplasmic reticulum membrane in mammalian cells.</title>
        <authorList>
            <person name="Yamamoto Y."/>
            <person name="Sakisaka T."/>
        </authorList>
    </citation>
    <scope>FUNCTION</scope>
    <scope>IDENTIFICATION IN GET COMPLEX</scope>
    <scope>INTERACTION WITH CAMLG</scope>
    <scope>IDENTIFICATION BY MASS SPECTROMETRY</scope>
</reference>
<reference key="8">
    <citation type="journal article" date="2014" name="PLoS ONE">
        <title>WRB and CAML are necessary and sufficient to mediate tail-anchored protein targeting to the ER membrane.</title>
        <authorList>
            <person name="Vilardi F."/>
            <person name="Stephan M."/>
            <person name="Clancy A."/>
            <person name="Janshoff A."/>
            <person name="Schwappach B."/>
        </authorList>
    </citation>
    <scope>FUNCTION</scope>
    <scope>INTERACTION WITH CALMG AND GET3</scope>
</reference>
<reference key="9">
    <citation type="journal article" date="2016" name="J. Biol. Chem.">
        <title>Tail-anchored protein insertion in mammals: function and reciprocal interactions of the two subunits of the TRC40 receptor.</title>
        <authorList>
            <person name="Colombo S.F."/>
            <person name="Cardani S."/>
            <person name="Maroli A."/>
            <person name="Vitiello A."/>
            <person name="Soffientini P."/>
            <person name="Crespi A."/>
            <person name="Bram R.F."/>
            <person name="Benfante R."/>
            <person name="Borgese N."/>
        </authorList>
    </citation>
    <scope>FUNCTION</scope>
</reference>
<reference key="10">
    <citation type="journal article" date="2019" name="Sci. Rep.">
        <title>The WRB Subunit of the Get3 Receptor is Required for the Correct Integration of its Partner CAML into the ER.</title>
        <authorList>
            <person name="Carvalho H.J.F."/>
            <person name="Del Bondio A."/>
            <person name="Maltecca F."/>
            <person name="Colombo S.F."/>
            <person name="Borgese N."/>
        </authorList>
    </citation>
    <scope>FUNCTION</scope>
    <scope>INTERACTION WITH CAMLG</scope>
</reference>
<reference key="11">
    <citation type="journal article" date="2020" name="Cell Rep.">
        <title>Differential Modes of Orphan Subunit Recognition for the WRB/CAML Complex.</title>
        <authorList>
            <person name="Inglis A.J."/>
            <person name="Page K.R."/>
            <person name="Guna A."/>
            <person name="Voorhees R.M."/>
        </authorList>
    </citation>
    <scope>FUNCTION</scope>
    <scope>INTERACTION WITH CAMLG</scope>
</reference>
<reference key="12">
    <citation type="journal article" date="2020" name="Mol. Cell">
        <title>Structural Basis of Tail-Anchored Membrane Protein Biogenesis by the GET Insertase Complex.</title>
        <authorList>
            <person name="McDowell M.A."/>
            <person name="Heimes M."/>
            <person name="Fiorentino F."/>
            <person name="Mehmood S."/>
            <person name="Farkas A."/>
            <person name="Coy-Vergara J."/>
            <person name="Wu D."/>
            <person name="Bolla J.R."/>
            <person name="Schmid V."/>
            <person name="Heinze R."/>
            <person name="Wild K."/>
            <person name="Flemming D."/>
            <person name="Pfeffer S."/>
            <person name="Schwappach B."/>
            <person name="Robinson C.V."/>
            <person name="Sinning I."/>
        </authorList>
    </citation>
    <scope>STRUCTURE BY ELECTRON MICROSCOPY (4.20 ANGSTROMS) OF THE GET COMPLEX</scope>
</reference>
<comment type="function">
    <text evidence="2 3 4 5 6 7">Required for the post-translational delivery of tail-anchored (TA) proteins to the endoplasmic reticulum (ER) (PubMed:21444755, PubMed:23041287, PubMed:24392163, PubMed:27226539). Together with CAMLG/GET2, acts as a membrane receptor for soluble GET3/TRC40, which recognizes and selectively binds the transmembrane domain of TA proteins in the cytosol (PubMed:21444755, PubMed:23041287, PubMed:24392163, PubMed:27226539). Required to ensure correct topology and ER insertion of CAMLG (PubMed:31417168, PubMed:32187542).</text>
</comment>
<comment type="subunit">
    <text evidence="2 3 4 6 7 8">Component of the Golgi to ER traffic (GET) complex, which is composed of GET1/WRB, CAMLG/GET2 and GET3/TRC40 (PubMed:21444755, PubMed:23041287, PubMed:24392163, PubMed:32910895). Within the complex, GET1 and CAMLG form a heterotetramer which is stabilized by phosphatidylinositol binding and which binds to the GET3 homodimer (PubMed:32910895). Interacts with CAMLG (via C-terminus) (PubMed:23041287, PubMed:31417168, PubMed:32187542). GET3 shows a higher affinity for CAMLG than for GET1 (PubMed:24392163).</text>
</comment>
<comment type="interaction">
    <interactant intactId="EBI-18908258">
        <id>O00258</id>
    </interactant>
    <interactant intactId="EBI-2813554">
        <id>Q8WTS1</id>
        <label>ABHD5</label>
    </interactant>
    <organismsDiffer>false</organismsDiffer>
    <experiments>3</experiments>
</comment>
<comment type="interaction">
    <interactant intactId="EBI-18908258">
        <id>O00258</id>
    </interactant>
    <interactant intactId="EBI-1171525">
        <id>P02652</id>
        <label>APOA2</label>
    </interactant>
    <organismsDiffer>false</organismsDiffer>
    <experiments>3</experiments>
</comment>
<comment type="interaction">
    <interactant intactId="EBI-18908258">
        <id>O00258</id>
    </interactant>
    <interactant intactId="EBI-4290634">
        <id>Q9BQE5</id>
        <label>APOL2</label>
    </interactant>
    <organismsDiffer>false</organismsDiffer>
    <experiments>3</experiments>
</comment>
<comment type="interaction">
    <interactant intactId="EBI-18908258">
        <id>O00258</id>
    </interactant>
    <interactant intactId="EBI-745213">
        <id>P29972</id>
        <label>AQP1</label>
    </interactant>
    <organismsDiffer>false</organismsDiffer>
    <experiments>3</experiments>
</comment>
<comment type="interaction">
    <interactant intactId="EBI-18908258">
        <id>O00258</id>
    </interactant>
    <interactant intactId="EBI-1748958">
        <id>P49069</id>
        <label>CAMLG</label>
    </interactant>
    <organismsDiffer>false</organismsDiffer>
    <experiments>3</experiments>
</comment>
<comment type="interaction">
    <interactant intactId="EBI-18908258">
        <id>O00258</id>
    </interactant>
    <interactant intactId="EBI-10271156">
        <id>Q8NHW4</id>
        <label>CCL4L2</label>
    </interactant>
    <organismsDiffer>false</organismsDiffer>
    <experiments>3</experiments>
</comment>
<comment type="interaction">
    <interactant intactId="EBI-18908258">
        <id>O00258</id>
    </interactant>
    <interactant intactId="EBI-14259393">
        <id>Q8IX05</id>
        <label>CD302</label>
    </interactant>
    <organismsDiffer>false</organismsDiffer>
    <experiments>3</experiments>
</comment>
<comment type="interaction">
    <interactant intactId="EBI-18908258">
        <id>O00258</id>
    </interactant>
    <interactant intactId="EBI-6657396">
        <id>P19397</id>
        <label>CD53</label>
    </interactant>
    <organismsDiffer>false</organismsDiffer>
    <experiments>3</experiments>
</comment>
<comment type="interaction">
    <interactant intactId="EBI-18908258">
        <id>O00258</id>
    </interactant>
    <interactant intactId="EBI-4402346">
        <id>P51798</id>
        <label>CLCN7</label>
    </interactant>
    <organismsDiffer>false</organismsDiffer>
    <experiments>3</experiments>
</comment>
<comment type="interaction">
    <interactant intactId="EBI-18908258">
        <id>O00258</id>
    </interactant>
    <interactant intactId="EBI-372265">
        <id>P21964</id>
        <label>COMT</label>
    </interactant>
    <organismsDiffer>false</organismsDiffer>
    <experiments>3</experiments>
</comment>
<comment type="interaction">
    <interactant intactId="EBI-18908258">
        <id>O00258</id>
    </interactant>
    <interactant intactId="EBI-2834035">
        <id>Q5RI15</id>
        <label>COX20</label>
    </interactant>
    <organismsDiffer>false</organismsDiffer>
    <experiments>3</experiments>
</comment>
<comment type="interaction">
    <interactant intactId="EBI-18908258">
        <id>O00258</id>
    </interactant>
    <interactant intactId="EBI-711490">
        <id>Q9UKR5</id>
        <label>ERG28</label>
    </interactant>
    <organismsDiffer>false</organismsDiffer>
    <experiments>3</experiments>
</comment>
<comment type="interaction">
    <interactant intactId="EBI-18908258">
        <id>O00258</id>
    </interactant>
    <interactant intactId="EBI-712096">
        <id>P30519</id>
        <label>HMOX2</label>
    </interactant>
    <organismsDiffer>false</organismsDiffer>
    <experiments>3</experiments>
</comment>
<comment type="interaction">
    <interactant intactId="EBI-18908258">
        <id>O00258</id>
    </interactant>
    <interactant intactId="EBI-12937691">
        <id>Q9BUP3-3</id>
        <label>HTATIP2</label>
    </interactant>
    <organismsDiffer>false</organismsDiffer>
    <experiments>3</experiments>
</comment>
<comment type="interaction">
    <interactant intactId="EBI-18908258">
        <id>O00258</id>
    </interactant>
    <interactant intactId="EBI-721750">
        <id>Q8N138</id>
        <label>ORMDL3</label>
    </interactant>
    <organismsDiffer>false</organismsDiffer>
    <experiments>3</experiments>
</comment>
<comment type="interaction">
    <interactant intactId="EBI-18908258">
        <id>O00258</id>
    </interactant>
    <interactant intactId="EBI-10485931">
        <id>Q5VZY2</id>
        <label>PLPP4</label>
    </interactant>
    <organismsDiffer>false</organismsDiffer>
    <experiments>3</experiments>
</comment>
<comment type="interaction">
    <interactant intactId="EBI-18908258">
        <id>O00258</id>
    </interactant>
    <interactant intactId="EBI-742898">
        <id>P43378</id>
        <label>PTPN9</label>
    </interactant>
    <organismsDiffer>false</organismsDiffer>
    <experiments>3</experiments>
</comment>
<comment type="interaction">
    <interactant intactId="EBI-18908258">
        <id>O00258</id>
    </interactant>
    <interactant intactId="EBI-1047876">
        <id>Q8IV61</id>
        <label>RASGRP3</label>
    </interactant>
    <organismsDiffer>false</organismsDiffer>
    <experiments>3</experiments>
</comment>
<comment type="interaction">
    <interactant intactId="EBI-18908258">
        <id>O00258</id>
    </interactant>
    <interactant intactId="EBI-10244780">
        <id>Q5QGT7</id>
        <label>RTP2</label>
    </interactant>
    <organismsDiffer>false</organismsDiffer>
    <experiments>3</experiments>
</comment>
<comment type="interaction">
    <interactant intactId="EBI-18908258">
        <id>O00258</id>
    </interactant>
    <interactant intactId="EBI-749270">
        <id>Q8N6R1</id>
        <label>SERP2</label>
    </interactant>
    <organismsDiffer>false</organismsDiffer>
    <experiments>3</experiments>
</comment>
<comment type="interaction">
    <interactant intactId="EBI-18908258">
        <id>O00258</id>
    </interactant>
    <interactant intactId="EBI-3923779">
        <id>Q9BZV2</id>
        <label>SLC19A3</label>
    </interactant>
    <organismsDiffer>false</organismsDiffer>
    <experiments>3</experiments>
</comment>
<comment type="interaction">
    <interactant intactId="EBI-18908258">
        <id>O00258</id>
    </interactant>
    <interactant intactId="EBI-13389236">
        <id>Q7Z769</id>
        <label>SLC35E3</label>
    </interactant>
    <organismsDiffer>false</organismsDiffer>
    <experiments>3</experiments>
</comment>
<comment type="interaction">
    <interactant intactId="EBI-18908258">
        <id>O00258</id>
    </interactant>
    <interactant intactId="EBI-4289564">
        <id>P30825</id>
        <label>SLC7A1</label>
    </interactant>
    <organismsDiffer>false</organismsDiffer>
    <experiments>3</experiments>
</comment>
<comment type="interaction">
    <interactant intactId="EBI-18908258">
        <id>O00258</id>
    </interactant>
    <interactant intactId="EBI-723396">
        <id>Q969W0</id>
        <label>SPTSSA</label>
    </interactant>
    <organismsDiffer>false</organismsDiffer>
    <experiments>3</experiments>
</comment>
<comment type="interaction">
    <interactant intactId="EBI-18908258">
        <id>O00258</id>
    </interactant>
    <interactant intactId="EBI-11956649">
        <id>P32856-2</id>
        <label>STX2</label>
    </interactant>
    <organismsDiffer>false</organismsDiffer>
    <experiments>3</experiments>
</comment>
<comment type="interaction">
    <interactant intactId="EBI-18908258">
        <id>O00258</id>
    </interactant>
    <interactant intactId="EBI-2877718">
        <id>Q9NZ01</id>
        <label>TECR</label>
    </interactant>
    <organismsDiffer>false</organismsDiffer>
    <experiments>3</experiments>
</comment>
<comment type="interaction">
    <interactant intactId="EBI-18908258">
        <id>O00258</id>
    </interactant>
    <interactant intactId="EBI-355727">
        <id>P02786</id>
        <label>TFRC</label>
    </interactant>
    <organismsDiffer>false</organismsDiffer>
    <experiments>3</experiments>
</comment>
<comment type="interaction">
    <interactant intactId="EBI-18908258">
        <id>O00258</id>
    </interactant>
    <interactant intactId="EBI-6448756">
        <id>Q96DZ7</id>
        <label>TM4SF19</label>
    </interactant>
    <organismsDiffer>false</organismsDiffer>
    <experiments>3</experiments>
</comment>
<comment type="interaction">
    <interactant intactId="EBI-18908258">
        <id>O00258</id>
    </interactant>
    <interactant intactId="EBI-12038591">
        <id>Q69YG0</id>
        <label>TMEM42</label>
    </interactant>
    <organismsDiffer>false</organismsDiffer>
    <experiments>3</experiments>
</comment>
<comment type="subcellular location">
    <subcellularLocation>
        <location evidence="2">Endoplasmic reticulum membrane</location>
        <topology evidence="1">Multi-pass membrane protein</topology>
    </subcellularLocation>
</comment>
<comment type="alternative products">
    <event type="alternative splicing"/>
    <isoform>
        <id>O00258-1</id>
        <name>1</name>
        <sequence type="displayed"/>
    </isoform>
    <isoform>
        <id>O00258-2</id>
        <name>2</name>
        <sequence type="described" ref="VSP_043081"/>
    </isoform>
</comment>
<comment type="similarity">
    <text evidence="10">Belongs to the WRB/GET1 family.</text>
</comment>
<keyword id="KW-0002">3D-structure</keyword>
<keyword id="KW-0025">Alternative splicing</keyword>
<keyword id="KW-0175">Coiled coil</keyword>
<keyword id="KW-0256">Endoplasmic reticulum</keyword>
<keyword id="KW-0472">Membrane</keyword>
<keyword id="KW-1267">Proteomics identification</keyword>
<keyword id="KW-1185">Reference proteome</keyword>
<keyword id="KW-0812">Transmembrane</keyword>
<keyword id="KW-1133">Transmembrane helix</keyword>
<proteinExistence type="evidence at protein level"/>
<name>GET1_HUMAN</name>
<dbReference type="EMBL" id="Y12478">
    <property type="protein sequence ID" value="CAA73081.1"/>
    <property type="molecule type" value="mRNA"/>
</dbReference>
<dbReference type="EMBL" id="AK293113">
    <property type="protein sequence ID" value="BAF85802.1"/>
    <property type="molecule type" value="mRNA"/>
</dbReference>
<dbReference type="EMBL" id="AK299144">
    <property type="protein sequence ID" value="BAG61196.1"/>
    <property type="molecule type" value="mRNA"/>
</dbReference>
<dbReference type="EMBL" id="AF064861">
    <property type="status" value="NOT_ANNOTATED_CDS"/>
    <property type="molecule type" value="Genomic_DNA"/>
</dbReference>
<dbReference type="EMBL" id="AF121781">
    <property type="status" value="NOT_ANNOTATED_CDS"/>
    <property type="molecule type" value="Genomic_DNA"/>
</dbReference>
<dbReference type="EMBL" id="AL163279">
    <property type="protein sequence ID" value="CAB90454.1"/>
    <property type="molecule type" value="Genomic_DNA"/>
</dbReference>
<dbReference type="EMBL" id="CH471079">
    <property type="protein sequence ID" value="EAX09645.1"/>
    <property type="molecule type" value="Genomic_DNA"/>
</dbReference>
<dbReference type="EMBL" id="CH471079">
    <property type="protein sequence ID" value="EAX09647.1"/>
    <property type="molecule type" value="Genomic_DNA"/>
</dbReference>
<dbReference type="EMBL" id="CH471079">
    <property type="protein sequence ID" value="EAX09649.1"/>
    <property type="molecule type" value="Genomic_DNA"/>
</dbReference>
<dbReference type="EMBL" id="BC012415">
    <property type="protein sequence ID" value="AAH12415.1"/>
    <property type="molecule type" value="mRNA"/>
</dbReference>
<dbReference type="CCDS" id="CCDS13664.1">
    <molecule id="O00258-1"/>
</dbReference>
<dbReference type="CCDS" id="CCDS54485.1">
    <molecule id="O00258-2"/>
</dbReference>
<dbReference type="RefSeq" id="NP_001139690.1">
    <molecule id="O00258-2"/>
    <property type="nucleotide sequence ID" value="NM_001146218.3"/>
</dbReference>
<dbReference type="RefSeq" id="NP_001337223.1">
    <molecule id="O00258-2"/>
    <property type="nucleotide sequence ID" value="NM_001350294.2"/>
</dbReference>
<dbReference type="RefSeq" id="NP_001337224.1">
    <molecule id="O00258-2"/>
    <property type="nucleotide sequence ID" value="NM_001350295.2"/>
</dbReference>
<dbReference type="RefSeq" id="NP_001337225.1">
    <molecule id="O00258-2"/>
    <property type="nucleotide sequence ID" value="NM_001350296.2"/>
</dbReference>
<dbReference type="RefSeq" id="NP_004618.2">
    <molecule id="O00258-1"/>
    <property type="nucleotide sequence ID" value="NM_004627.4"/>
</dbReference>
<dbReference type="PDB" id="6SO5">
    <property type="method" value="EM"/>
    <property type="resolution" value="4.20 A"/>
    <property type="chains" value="C/D=1-174"/>
</dbReference>
<dbReference type="PDB" id="8CQZ">
    <property type="method" value="X-ray"/>
    <property type="resolution" value="2.80 A"/>
    <property type="chains" value="B=38-97"/>
</dbReference>
<dbReference type="PDB" id="8CR1">
    <property type="method" value="EM"/>
    <property type="resolution" value="3.20 A"/>
    <property type="chains" value="C/D=1-174"/>
</dbReference>
<dbReference type="PDB" id="8CR2">
    <property type="method" value="EM"/>
    <property type="resolution" value="4.20 A"/>
    <property type="chains" value="C/D=1-174"/>
</dbReference>
<dbReference type="PDBsum" id="6SO5"/>
<dbReference type="PDBsum" id="8CQZ"/>
<dbReference type="PDBsum" id="8CR1"/>
<dbReference type="PDBsum" id="8CR2"/>
<dbReference type="EMDB" id="EMD-10266"/>
<dbReference type="EMDB" id="EMD-16801"/>
<dbReference type="EMDB" id="EMD-16802"/>
<dbReference type="SMR" id="O00258"/>
<dbReference type="BioGRID" id="113322">
    <property type="interactions" value="63"/>
</dbReference>
<dbReference type="ComplexPortal" id="CPX-6464">
    <property type="entry name" value="GET complex"/>
</dbReference>
<dbReference type="FunCoup" id="O00258">
    <property type="interactions" value="2279"/>
</dbReference>
<dbReference type="IntAct" id="O00258">
    <property type="interactions" value="53"/>
</dbReference>
<dbReference type="STRING" id="9606.ENSP00000496813"/>
<dbReference type="TCDB" id="3.A.19.1.1">
    <property type="family name" value="the guided entry of tail anchored protein (get) family"/>
</dbReference>
<dbReference type="iPTMnet" id="O00258"/>
<dbReference type="PhosphoSitePlus" id="O00258"/>
<dbReference type="BioMuta" id="WRB"/>
<dbReference type="jPOST" id="O00258"/>
<dbReference type="MassIVE" id="O00258"/>
<dbReference type="PaxDb" id="9606-ENSP00000327716"/>
<dbReference type="PeptideAtlas" id="O00258"/>
<dbReference type="ProteomicsDB" id="47813">
    <molecule id="O00258-1"/>
</dbReference>
<dbReference type="ProteomicsDB" id="47814">
    <molecule id="O00258-2"/>
</dbReference>
<dbReference type="Pumba" id="O00258"/>
<dbReference type="Antibodypedia" id="3116">
    <property type="antibodies" value="142 antibodies from 21 providers"/>
</dbReference>
<dbReference type="DNASU" id="7485"/>
<dbReference type="Ensembl" id="ENST00000380708.5">
    <molecule id="O00258-2"/>
    <property type="protein sequence ID" value="ENSP00000370084.1"/>
    <property type="gene ID" value="ENSG00000182093.16"/>
</dbReference>
<dbReference type="Ensembl" id="ENST00000398753.5">
    <molecule id="O00258-2"/>
    <property type="protein sequence ID" value="ENSP00000381737.1"/>
    <property type="gene ID" value="ENSG00000182093.16"/>
</dbReference>
<dbReference type="Ensembl" id="ENST00000649170.1">
    <molecule id="O00258-1"/>
    <property type="protein sequence ID" value="ENSP00000496813.1"/>
    <property type="gene ID" value="ENSG00000182093.16"/>
</dbReference>
<dbReference type="Ensembl" id="ENST00000650376.1">
    <molecule id="O00258-2"/>
    <property type="protein sequence ID" value="ENSP00000497103.1"/>
    <property type="gene ID" value="ENSG00000182093.16"/>
</dbReference>
<dbReference type="GeneID" id="7485"/>
<dbReference type="KEGG" id="hsa:7485"/>
<dbReference type="MANE-Select" id="ENST00000649170.1">
    <property type="protein sequence ID" value="ENSP00000496813.1"/>
    <property type="RefSeq nucleotide sequence ID" value="NM_004627.6"/>
    <property type="RefSeq protein sequence ID" value="NP_004618.2"/>
</dbReference>
<dbReference type="UCSC" id="uc002yxs.4">
    <molecule id="O00258-1"/>
    <property type="organism name" value="human"/>
</dbReference>
<dbReference type="AGR" id="HGNC:12790"/>
<dbReference type="CTD" id="7485"/>
<dbReference type="DisGeNET" id="7485"/>
<dbReference type="GeneCards" id="GET1"/>
<dbReference type="HGNC" id="HGNC:12790">
    <property type="gene designation" value="GET1"/>
</dbReference>
<dbReference type="HPA" id="ENSG00000182093">
    <property type="expression patterns" value="Tissue enhanced (choroid)"/>
</dbReference>
<dbReference type="MIM" id="602915">
    <property type="type" value="gene"/>
</dbReference>
<dbReference type="neXtProt" id="NX_O00258"/>
<dbReference type="OpenTargets" id="ENSG00000182093"/>
<dbReference type="VEuPathDB" id="HostDB:ENSG00000182093"/>
<dbReference type="eggNOG" id="KOG4253">
    <property type="taxonomic scope" value="Eukaryota"/>
</dbReference>
<dbReference type="GeneTree" id="ENSGT00390000008610"/>
<dbReference type="InParanoid" id="O00258"/>
<dbReference type="OMA" id="AEWIISF"/>
<dbReference type="OrthoDB" id="69461at2759"/>
<dbReference type="PAN-GO" id="O00258">
    <property type="GO annotations" value="2 GO annotations based on evolutionary models"/>
</dbReference>
<dbReference type="PhylomeDB" id="O00258"/>
<dbReference type="TreeFam" id="TF314708"/>
<dbReference type="PathwayCommons" id="O00258"/>
<dbReference type="Reactome" id="R-HSA-9609523">
    <property type="pathway name" value="Insertion of tail-anchored proteins into the endoplasmic reticulum membrane"/>
</dbReference>
<dbReference type="SignaLink" id="O00258"/>
<dbReference type="BioGRID-ORCS" id="7485">
    <property type="hits" value="429 hits in 1173 CRISPR screens"/>
</dbReference>
<dbReference type="ChiTaRS" id="WRB">
    <property type="organism name" value="human"/>
</dbReference>
<dbReference type="GenomeRNAi" id="7485"/>
<dbReference type="Pharos" id="O00258">
    <property type="development level" value="Tbio"/>
</dbReference>
<dbReference type="PRO" id="PR:O00258"/>
<dbReference type="Proteomes" id="UP000005640">
    <property type="component" value="Chromosome 21"/>
</dbReference>
<dbReference type="RNAct" id="O00258">
    <property type="molecule type" value="protein"/>
</dbReference>
<dbReference type="Bgee" id="ENSG00000182093">
    <property type="expression patterns" value="Expressed in bronchial epithelial cell and 207 other cell types or tissues"/>
</dbReference>
<dbReference type="ExpressionAtlas" id="O00258">
    <property type="expression patterns" value="baseline and differential"/>
</dbReference>
<dbReference type="GO" id="GO:0005789">
    <property type="term" value="C:endoplasmic reticulum membrane"/>
    <property type="evidence" value="ECO:0000303"/>
    <property type="project" value="ComplexPortal"/>
</dbReference>
<dbReference type="GO" id="GO:0043529">
    <property type="term" value="C:GET complex"/>
    <property type="evidence" value="ECO:0000314"/>
    <property type="project" value="UniProtKB"/>
</dbReference>
<dbReference type="GO" id="GO:0005634">
    <property type="term" value="C:nucleus"/>
    <property type="evidence" value="ECO:0000304"/>
    <property type="project" value="ProtInc"/>
</dbReference>
<dbReference type="GO" id="GO:0043495">
    <property type="term" value="F:protein-membrane adaptor activity"/>
    <property type="evidence" value="ECO:0000318"/>
    <property type="project" value="GO_Central"/>
</dbReference>
<dbReference type="GO" id="GO:0051649">
    <property type="term" value="P:establishment of localization in cell"/>
    <property type="evidence" value="ECO:0007669"/>
    <property type="project" value="Ensembl"/>
</dbReference>
<dbReference type="GO" id="GO:0071599">
    <property type="term" value="P:otic vesicle development"/>
    <property type="evidence" value="ECO:0007669"/>
    <property type="project" value="Ensembl"/>
</dbReference>
<dbReference type="GO" id="GO:0006620">
    <property type="term" value="P:post-translational protein targeting to endoplasmic reticulum membrane"/>
    <property type="evidence" value="ECO:0007669"/>
    <property type="project" value="Ensembl"/>
</dbReference>
<dbReference type="GO" id="GO:0045048">
    <property type="term" value="P:protein insertion into ER membrane"/>
    <property type="evidence" value="ECO:0000314"/>
    <property type="project" value="UniProtKB"/>
</dbReference>
<dbReference type="GO" id="GO:0050821">
    <property type="term" value="P:protein stabilization"/>
    <property type="evidence" value="ECO:0000314"/>
    <property type="project" value="UniProtKB"/>
</dbReference>
<dbReference type="GO" id="GO:0007605">
    <property type="term" value="P:sensory perception of sound"/>
    <property type="evidence" value="ECO:0007669"/>
    <property type="project" value="Ensembl"/>
</dbReference>
<dbReference type="GO" id="GO:0050808">
    <property type="term" value="P:synapse organization"/>
    <property type="evidence" value="ECO:0007669"/>
    <property type="project" value="Ensembl"/>
</dbReference>
<dbReference type="GO" id="GO:0071816">
    <property type="term" value="P:tail-anchored membrane protein insertion into ER membrane"/>
    <property type="evidence" value="ECO:0000314"/>
    <property type="project" value="UniProtKB"/>
</dbReference>
<dbReference type="FunFam" id="1.10.287.660:FF:000004">
    <property type="entry name" value="tail-anchored protein insertion receptor WRB"/>
    <property type="match status" value="1"/>
</dbReference>
<dbReference type="Gene3D" id="1.10.287.660">
    <property type="entry name" value="Helix hairpin bin"/>
    <property type="match status" value="1"/>
</dbReference>
<dbReference type="InterPro" id="IPR028945">
    <property type="entry name" value="Get1"/>
</dbReference>
<dbReference type="InterPro" id="IPR029012">
    <property type="entry name" value="Helix_hairpin_bin_sf"/>
</dbReference>
<dbReference type="PANTHER" id="PTHR42650:SF1">
    <property type="entry name" value="GUIDED ENTRY OF TAIL-ANCHORED PROTEINS FACTOR 1"/>
    <property type="match status" value="1"/>
</dbReference>
<dbReference type="PANTHER" id="PTHR42650">
    <property type="entry name" value="TAIL-ANCHORED PROTEIN INSERTION RECEPTOR WRB"/>
    <property type="match status" value="1"/>
</dbReference>
<dbReference type="Pfam" id="PF04420">
    <property type="entry name" value="CHD5"/>
    <property type="match status" value="1"/>
</dbReference>
<accession>O00258</accession>
<accession>A8KAP8</accession>
<accession>A8MQ44</accession>
<accession>D3DSH9</accession>
<accession>O60740</accession>